<dbReference type="EC" id="3.1.1.4"/>
<dbReference type="EMBL" id="AB062444">
    <property type="protein sequence ID" value="BAB72251.1"/>
    <property type="molecule type" value="Genomic_DNA"/>
</dbReference>
<dbReference type="SMR" id="Q8UUI1"/>
<dbReference type="Proteomes" id="UP000694406">
    <property type="component" value="Unplaced"/>
</dbReference>
<dbReference type="GO" id="GO:0005576">
    <property type="term" value="C:extracellular region"/>
    <property type="evidence" value="ECO:0007669"/>
    <property type="project" value="UniProtKB-SubCell"/>
</dbReference>
<dbReference type="GO" id="GO:0005509">
    <property type="term" value="F:calcium ion binding"/>
    <property type="evidence" value="ECO:0007669"/>
    <property type="project" value="InterPro"/>
</dbReference>
<dbReference type="GO" id="GO:0047498">
    <property type="term" value="F:calcium-dependent phospholipase A2 activity"/>
    <property type="evidence" value="ECO:0007669"/>
    <property type="project" value="TreeGrafter"/>
</dbReference>
<dbReference type="GO" id="GO:0005543">
    <property type="term" value="F:phospholipid binding"/>
    <property type="evidence" value="ECO:0007669"/>
    <property type="project" value="TreeGrafter"/>
</dbReference>
<dbReference type="GO" id="GO:0050482">
    <property type="term" value="P:arachidonate secretion"/>
    <property type="evidence" value="ECO:0007669"/>
    <property type="project" value="InterPro"/>
</dbReference>
<dbReference type="GO" id="GO:0016042">
    <property type="term" value="P:lipid catabolic process"/>
    <property type="evidence" value="ECO:0007669"/>
    <property type="project" value="UniProtKB-KW"/>
</dbReference>
<dbReference type="GO" id="GO:0006644">
    <property type="term" value="P:phospholipid metabolic process"/>
    <property type="evidence" value="ECO:0007669"/>
    <property type="project" value="InterPro"/>
</dbReference>
<dbReference type="CDD" id="cd00125">
    <property type="entry name" value="PLA2c"/>
    <property type="match status" value="1"/>
</dbReference>
<dbReference type="FunFam" id="1.20.90.10:FF:000007">
    <property type="entry name" value="Acidic phospholipase A2"/>
    <property type="match status" value="1"/>
</dbReference>
<dbReference type="Gene3D" id="1.20.90.10">
    <property type="entry name" value="Phospholipase A2 domain"/>
    <property type="match status" value="1"/>
</dbReference>
<dbReference type="InterPro" id="IPR001211">
    <property type="entry name" value="PLipase_A2"/>
</dbReference>
<dbReference type="InterPro" id="IPR033112">
    <property type="entry name" value="PLipase_A2_Asp_AS"/>
</dbReference>
<dbReference type="InterPro" id="IPR016090">
    <property type="entry name" value="PLipase_A2_dom"/>
</dbReference>
<dbReference type="InterPro" id="IPR036444">
    <property type="entry name" value="PLipase_A2_dom_sf"/>
</dbReference>
<dbReference type="InterPro" id="IPR033113">
    <property type="entry name" value="PLipase_A2_His_AS"/>
</dbReference>
<dbReference type="PANTHER" id="PTHR11716:SF106">
    <property type="entry name" value="PHOSPHOLIPASE A2 A2-ACTITOXIN-UCS2A-LIKE"/>
    <property type="match status" value="1"/>
</dbReference>
<dbReference type="PANTHER" id="PTHR11716">
    <property type="entry name" value="PHOSPHOLIPASE A2 FAMILY MEMBER"/>
    <property type="match status" value="1"/>
</dbReference>
<dbReference type="Pfam" id="PF00068">
    <property type="entry name" value="Phospholip_A2_1"/>
    <property type="match status" value="1"/>
</dbReference>
<dbReference type="PRINTS" id="PR00389">
    <property type="entry name" value="PHPHLIPASEA2"/>
</dbReference>
<dbReference type="SMART" id="SM00085">
    <property type="entry name" value="PA2c"/>
    <property type="match status" value="1"/>
</dbReference>
<dbReference type="SUPFAM" id="SSF48619">
    <property type="entry name" value="Phospholipase A2, PLA2"/>
    <property type="match status" value="1"/>
</dbReference>
<dbReference type="PROSITE" id="PS00119">
    <property type="entry name" value="PA2_ASP"/>
    <property type="match status" value="1"/>
</dbReference>
<dbReference type="PROSITE" id="PS00118">
    <property type="entry name" value="PA2_HIS"/>
    <property type="match status" value="1"/>
</dbReference>
<sequence length="145" mass="16276">MYPAHLLLLLAVCVSLLGASAIPPLPLNLIQFTYLIECANKGRRTSFNYADYGCYCGIGGSGTPVDKLDRCCKTHDECYAQAEKKGCYPKLTMYNYYCGEGGPYCNSKTECQRFVCDCDVRAADCFARYPYNNKNYNINTSKRCK</sequence>
<reference key="1">
    <citation type="journal article" date="2002" name="Toxicon">
        <title>A comparative analysis of invaded sequences from group IA phospholipase A(2) genes provides evidence about the divergence period of genes groups and snake families.</title>
        <authorList>
            <person name="Fujimi T.J."/>
            <person name="Tsuchiya T."/>
            <person name="Tamiya T."/>
        </authorList>
    </citation>
    <scope>NUCLEOTIDE SEQUENCE [GENOMIC DNA]</scope>
    <source>
        <tissue>Liver</tissue>
    </source>
</reference>
<evidence type="ECO:0000250" key="1"/>
<evidence type="ECO:0000255" key="2"/>
<evidence type="ECO:0000255" key="3">
    <source>
        <dbReference type="PROSITE-ProRule" id="PRU10035"/>
    </source>
</evidence>
<evidence type="ECO:0000255" key="4">
    <source>
        <dbReference type="PROSITE-ProRule" id="PRU10036"/>
    </source>
</evidence>
<evidence type="ECO:0000305" key="5"/>
<proteinExistence type="inferred from homology"/>
<keyword id="KW-0106">Calcium</keyword>
<keyword id="KW-1015">Disulfide bond</keyword>
<keyword id="KW-0378">Hydrolase</keyword>
<keyword id="KW-0442">Lipid degradation</keyword>
<keyword id="KW-0443">Lipid metabolism</keyword>
<keyword id="KW-0479">Metal-binding</keyword>
<keyword id="KW-1185">Reference proteome</keyword>
<keyword id="KW-0964">Secreted</keyword>
<keyword id="KW-0732">Signal</keyword>
<feature type="signal peptide" evidence="2">
    <location>
        <begin position="1"/>
        <end position="21"/>
    </location>
</feature>
<feature type="propeptide" id="PRO_0000022894" evidence="1">
    <location>
        <begin position="22"/>
        <end position="27"/>
    </location>
</feature>
<feature type="chain" id="PRO_0000022895" description="Basic phospholipase A2 PC17">
    <location>
        <begin position="28"/>
        <end position="145"/>
    </location>
</feature>
<feature type="active site" evidence="1">
    <location>
        <position position="75"/>
    </location>
</feature>
<feature type="active site" evidence="1">
    <location>
        <position position="119"/>
    </location>
</feature>
<feature type="binding site" evidence="1">
    <location>
        <position position="55"/>
    </location>
    <ligand>
        <name>Ca(2+)</name>
        <dbReference type="ChEBI" id="CHEBI:29108"/>
    </ligand>
</feature>
<feature type="binding site" evidence="1">
    <location>
        <position position="57"/>
    </location>
    <ligand>
        <name>Ca(2+)</name>
        <dbReference type="ChEBI" id="CHEBI:29108"/>
    </ligand>
</feature>
<feature type="binding site" evidence="1">
    <location>
        <position position="59"/>
    </location>
    <ligand>
        <name>Ca(2+)</name>
        <dbReference type="ChEBI" id="CHEBI:29108"/>
    </ligand>
</feature>
<feature type="binding site" evidence="1">
    <location>
        <position position="76"/>
    </location>
    <ligand>
        <name>Ca(2+)</name>
        <dbReference type="ChEBI" id="CHEBI:29108"/>
    </ligand>
</feature>
<feature type="disulfide bond" evidence="1">
    <location>
        <begin position="38"/>
        <end position="98"/>
    </location>
</feature>
<feature type="disulfide bond" evidence="1">
    <location>
        <begin position="54"/>
        <end position="144"/>
    </location>
</feature>
<feature type="disulfide bond" evidence="1">
    <location>
        <begin position="56"/>
        <end position="72"/>
    </location>
</feature>
<feature type="disulfide bond" evidence="1">
    <location>
        <begin position="71"/>
        <end position="125"/>
    </location>
</feature>
<feature type="disulfide bond" evidence="1">
    <location>
        <begin position="78"/>
        <end position="118"/>
    </location>
</feature>
<feature type="disulfide bond" evidence="1">
    <location>
        <begin position="87"/>
        <end position="111"/>
    </location>
</feature>
<feature type="disulfide bond" evidence="1">
    <location>
        <begin position="105"/>
        <end position="116"/>
    </location>
</feature>
<name>PA2BH_LATLA</name>
<organism>
    <name type="scientific">Laticauda laticaudata</name>
    <name type="common">Blue-ringed sea krait</name>
    <name type="synonym">Blue-lipped sea krait</name>
    <dbReference type="NCBI Taxonomy" id="8630"/>
    <lineage>
        <taxon>Eukaryota</taxon>
        <taxon>Metazoa</taxon>
        <taxon>Chordata</taxon>
        <taxon>Craniata</taxon>
        <taxon>Vertebrata</taxon>
        <taxon>Euteleostomi</taxon>
        <taxon>Lepidosauria</taxon>
        <taxon>Squamata</taxon>
        <taxon>Bifurcata</taxon>
        <taxon>Unidentata</taxon>
        <taxon>Episquamata</taxon>
        <taxon>Toxicofera</taxon>
        <taxon>Serpentes</taxon>
        <taxon>Colubroidea</taxon>
        <taxon>Elapidae</taxon>
        <taxon>Laticaudinae</taxon>
        <taxon>Laticauda</taxon>
    </lineage>
</organism>
<protein>
    <recommendedName>
        <fullName>Basic phospholipase A2 PC17</fullName>
        <shortName>svPLA2</shortName>
        <ecNumber>3.1.1.4</ecNumber>
    </recommendedName>
    <alternativeName>
        <fullName>Phosphatidylcholine 2-acylhydrolase</fullName>
    </alternativeName>
</protein>
<comment type="function">
    <text evidence="1">PLA2 catalyzes the calcium-dependent hydrolysis of the 2-acyl groups in 3-sn-phosphoglycerides.</text>
</comment>
<comment type="catalytic activity">
    <reaction evidence="3 4">
        <text>a 1,2-diacyl-sn-glycero-3-phosphocholine + H2O = a 1-acyl-sn-glycero-3-phosphocholine + a fatty acid + H(+)</text>
        <dbReference type="Rhea" id="RHEA:15801"/>
        <dbReference type="ChEBI" id="CHEBI:15377"/>
        <dbReference type="ChEBI" id="CHEBI:15378"/>
        <dbReference type="ChEBI" id="CHEBI:28868"/>
        <dbReference type="ChEBI" id="CHEBI:57643"/>
        <dbReference type="ChEBI" id="CHEBI:58168"/>
        <dbReference type="EC" id="3.1.1.4"/>
    </reaction>
</comment>
<comment type="cofactor">
    <cofactor evidence="1">
        <name>Ca(2+)</name>
        <dbReference type="ChEBI" id="CHEBI:29108"/>
    </cofactor>
    <text evidence="1">Binds 1 Ca(2+) ion.</text>
</comment>
<comment type="subcellular location">
    <subcellularLocation>
        <location evidence="1">Secreted</location>
    </subcellularLocation>
</comment>
<comment type="similarity">
    <text evidence="5">Belongs to the phospholipase A2 family. Group I subfamily. D49 sub-subfamily.</text>
</comment>
<accession>Q8UUI1</accession>